<protein>
    <recommendedName>
        <fullName evidence="15">Glucosamine-6-phosphate deaminase 2</fullName>
        <shortName>GlcN6P deaminase 2</shortName>
        <ecNumber evidence="4">3.5.99.6</ecNumber>
    </recommendedName>
    <alternativeName>
        <fullName evidence="15">Glucosamine-6-phosphate isomerase 2</fullName>
    </alternativeName>
    <alternativeName>
        <fullName>Glucosamine-6-phosphate isomerase SB52</fullName>
    </alternativeName>
</protein>
<organism evidence="16">
    <name type="scientific">Homo sapiens</name>
    <name type="common">Human</name>
    <dbReference type="NCBI Taxonomy" id="9606"/>
    <lineage>
        <taxon>Eukaryota</taxon>
        <taxon>Metazoa</taxon>
        <taxon>Chordata</taxon>
        <taxon>Craniata</taxon>
        <taxon>Vertebrata</taxon>
        <taxon>Euteleostomi</taxon>
        <taxon>Mammalia</taxon>
        <taxon>Eutheria</taxon>
        <taxon>Euarchontoglires</taxon>
        <taxon>Primates</taxon>
        <taxon>Haplorrhini</taxon>
        <taxon>Catarrhini</taxon>
        <taxon>Hominidae</taxon>
        <taxon>Homo</taxon>
    </lineage>
</organism>
<gene>
    <name evidence="9 15" type="primary">GNPDA2</name>
    <name type="synonym">GNP2</name>
</gene>
<comment type="function">
    <text evidence="4 6">Catalyzes the reversible conversion of alpha-D-glucosamine 6-phosphate (GlcN-6P) into beta-D-fructose 6-phosphate (Fru-6P) and ammonium ion, a regulatory reaction step in de novo uridine diphosphate-N-acetyl-alpha-D-glucosamine (UDP-GlcNAc) biosynthesis via hexosamine pathway. Deamination is coupled to aldo-keto isomerization mediating the metabolic flux from UDP-GlcNAc toward Fru-6P. At high ammonium level can drive amination and isomerization of Fru-6P toward hexosamines and UDP-GlcNAc synthesis. Has a role in fine tuning the metabolic fluctuations of cytosolic UDP-GlcNAc and their effects on hyaluronan synthesis that occur during tissue remodeling.</text>
</comment>
<comment type="catalytic activity">
    <reaction evidence="4">
        <text>alpha-D-glucosamine 6-phosphate + H2O = beta-D-fructose 6-phosphate + NH4(+)</text>
        <dbReference type="Rhea" id="RHEA:12172"/>
        <dbReference type="ChEBI" id="CHEBI:15377"/>
        <dbReference type="ChEBI" id="CHEBI:28938"/>
        <dbReference type="ChEBI" id="CHEBI:57634"/>
        <dbReference type="ChEBI" id="CHEBI:75989"/>
        <dbReference type="EC" id="3.5.99.6"/>
    </reaction>
    <physiologicalReaction direction="left-to-right" evidence="13 14">
        <dbReference type="Rhea" id="RHEA:12173"/>
    </physiologicalReaction>
    <physiologicalReaction direction="right-to-left" evidence="14">
        <dbReference type="Rhea" id="RHEA:12174"/>
    </physiologicalReaction>
</comment>
<comment type="activity regulation">
    <text evidence="4">Allosterically activated by N-acetylglucosamine-6-phosphate (GlcNAc6P).</text>
</comment>
<comment type="pathway">
    <text evidence="14">Nucleotide-sugar biosynthesis; UDP-N-acetyl-alpha-D-glucosamine biosynthesis; alpha-D-glucosamine 6-phosphate from D-fructose 6-phosphate: step 1/1.</text>
</comment>
<comment type="subunit">
    <text evidence="1">Homohexamer.</text>
</comment>
<comment type="interaction">
    <interactant intactId="EBI-10275006">
        <id>Q8TDQ7</id>
    </interactant>
    <interactant intactId="EBI-2798672">
        <id>Q9Y303</id>
        <label>AMDHD2</label>
    </interactant>
    <organismsDiffer>false</organismsDiffer>
    <experiments>6</experiments>
</comment>
<comment type="interaction">
    <interactant intactId="EBI-10275006">
        <id>Q8TDQ7</id>
    </interactant>
    <interactant intactId="EBI-719493">
        <id>P14373</id>
        <label>TRIM27</label>
    </interactant>
    <organismsDiffer>false</organismsDiffer>
    <experiments>4</experiments>
</comment>
<comment type="interaction">
    <interactant intactId="EBI-12197555">
        <id>Q8TDQ7-2</id>
    </interactant>
    <interactant intactId="EBI-12323557">
        <id>Q9Y303-2</id>
        <label>AMDHD2</label>
    </interactant>
    <organismsDiffer>false</organismsDiffer>
    <experiments>3</experiments>
</comment>
<comment type="interaction">
    <interactant intactId="EBI-12197555">
        <id>Q8TDQ7-2</id>
    </interactant>
    <interactant intactId="EBI-746778">
        <id>Q96A72</id>
        <label>MAGOHB</label>
    </interactant>
    <organismsDiffer>false</organismsDiffer>
    <experiments>3</experiments>
</comment>
<comment type="interaction">
    <interactant intactId="EBI-12197555">
        <id>Q8TDQ7-2</id>
    </interactant>
    <interactant intactId="EBI-741158">
        <id>Q96HA8</id>
        <label>NTAQ1</label>
    </interactant>
    <organismsDiffer>false</organismsDiffer>
    <experiments>3</experiments>
</comment>
<comment type="interaction">
    <interactant intactId="EBI-12197555">
        <id>Q8TDQ7-2</id>
    </interactant>
    <interactant intactId="EBI-719493">
        <id>P14373</id>
        <label>TRIM27</label>
    </interactant>
    <organismsDiffer>false</organismsDiffer>
    <experiments>3</experiments>
</comment>
<comment type="subcellular location">
    <subcellularLocation>
        <location evidence="1">Cytoplasm</location>
    </subcellularLocation>
</comment>
<comment type="alternative products">
    <event type="alternative splicing"/>
    <isoform>
        <id>Q8TDQ7-1</id>
        <name>1</name>
        <sequence type="displayed"/>
    </isoform>
    <isoform>
        <id>Q8TDQ7-2</id>
        <name>2</name>
        <sequence type="described" ref="VSP_034579"/>
    </isoform>
    <isoform>
        <id>Q8TDQ7-3</id>
        <name>3</name>
        <sequence type="described" ref="VSP_034580"/>
    </isoform>
    <isoform>
        <id>Q8TDQ7-4</id>
        <name>4</name>
        <sequence type="described" ref="VSP_047033"/>
    </isoform>
    <isoform>
        <id>Q8TDQ7-5</id>
        <name>5</name>
        <sequence type="described" ref="VSP_047034"/>
    </isoform>
</comment>
<comment type="tissue specificity">
    <text evidence="4">Ubiquitous, with highest expression detected in testis, ovary, placenta, and heart.</text>
</comment>
<comment type="similarity">
    <text evidence="12">Belongs to the glucosamine/galactosamine-6-phosphate isomerase family.</text>
</comment>
<comment type="sequence caution" evidence="12">
    <conflict type="erroneous initiation">
        <sequence resource="EMBL-CDS" id="BAD93141"/>
    </conflict>
</comment>
<feature type="chain" id="PRO_0000343205" description="Glucosamine-6-phosphate deaminase 2">
    <location>
        <begin position="1"/>
        <end position="276"/>
    </location>
</feature>
<feature type="coiled-coil region" evidence="3">
    <location>
        <begin position="105"/>
        <end position="130"/>
    </location>
</feature>
<feature type="active site" description="Proton acceptor; for enolization step" evidence="1">
    <location>
        <position position="72"/>
    </location>
</feature>
<feature type="active site" description="For ring-opening step" evidence="1">
    <location>
        <position position="141"/>
    </location>
</feature>
<feature type="active site" description="Proton acceptor; for ring-opening step" evidence="1">
    <location>
        <position position="143"/>
    </location>
</feature>
<feature type="active site" description="For ring-opening step" evidence="1">
    <location>
        <position position="148"/>
    </location>
</feature>
<feature type="modified residue" description="Phosphothreonine" evidence="2">
    <location>
        <position position="161"/>
    </location>
</feature>
<feature type="splice variant" id="VSP_047033" description="In isoform 4." evidence="7">
    <location>
        <begin position="1"/>
        <end position="70"/>
    </location>
</feature>
<feature type="splice variant" id="VSP_047034" description="In isoform 5." evidence="10">
    <location>
        <begin position="43"/>
        <end position="76"/>
    </location>
</feature>
<feature type="splice variant" id="VSP_034579" description="In isoform 2." evidence="8">
    <location>
        <position position="217"/>
    </location>
</feature>
<feature type="splice variant" id="VSP_034580" description="In isoform 3." evidence="11">
    <original>LMHVHNKLVDPLFSMKDGN</original>
    <variation>EH</variation>
    <location>
        <begin position="258"/>
        <end position="276"/>
    </location>
</feature>
<feature type="sequence variant" id="VAR_044348" description="In dbSNP:rs17851302." evidence="5">
    <original>P</original>
    <variation>S</variation>
    <location>
        <position position="182"/>
    </location>
</feature>
<feature type="sequence conflict" description="In Ref. 3; BAB70977." evidence="12" ref="3">
    <original>L</original>
    <variation>P</variation>
    <location>
        <position position="37"/>
    </location>
</feature>
<keyword id="KW-0025">Alternative splicing</keyword>
<keyword id="KW-0119">Carbohydrate metabolism</keyword>
<keyword id="KW-0175">Coiled coil</keyword>
<keyword id="KW-0963">Cytoplasm</keyword>
<keyword id="KW-0378">Hydrolase</keyword>
<keyword id="KW-0413">Isomerase</keyword>
<keyword id="KW-0597">Phosphoprotein</keyword>
<keyword id="KW-1267">Proteomics identification</keyword>
<keyword id="KW-1185">Reference proteome</keyword>
<dbReference type="EC" id="3.5.99.6" evidence="4"/>
<dbReference type="EMBL" id="AF247786">
    <property type="protein sequence ID" value="AAL95691.1"/>
    <property type="molecule type" value="mRNA"/>
</dbReference>
<dbReference type="EMBL" id="AY173948">
    <property type="protein sequence ID" value="AAO49718.1"/>
    <property type="molecule type" value="mRNA"/>
</dbReference>
<dbReference type="EMBL" id="AK055639">
    <property type="protein sequence ID" value="BAB70977.1"/>
    <property type="molecule type" value="mRNA"/>
</dbReference>
<dbReference type="EMBL" id="AK296051">
    <property type="protein sequence ID" value="BAG58815.1"/>
    <property type="molecule type" value="mRNA"/>
</dbReference>
<dbReference type="EMBL" id="AB209904">
    <property type="protein sequence ID" value="BAD93141.1"/>
    <property type="status" value="ALT_INIT"/>
    <property type="molecule type" value="mRNA"/>
</dbReference>
<dbReference type="EMBL" id="AC096586">
    <property type="status" value="NOT_ANNOTATED_CDS"/>
    <property type="molecule type" value="Genomic_DNA"/>
</dbReference>
<dbReference type="EMBL" id="CH471069">
    <property type="protein sequence ID" value="EAW93019.1"/>
    <property type="molecule type" value="Genomic_DNA"/>
</dbReference>
<dbReference type="EMBL" id="BC015532">
    <property type="protein sequence ID" value="AAH15532.1"/>
    <property type="molecule type" value="mRNA"/>
</dbReference>
<dbReference type="EMBL" id="AL834506">
    <property type="protein sequence ID" value="CAD39163.1"/>
    <property type="molecule type" value="mRNA"/>
</dbReference>
<dbReference type="CCDS" id="CCDS3469.1">
    <molecule id="Q8TDQ7-1"/>
</dbReference>
<dbReference type="CCDS" id="CCDS59472.1">
    <molecule id="Q8TDQ7-4"/>
</dbReference>
<dbReference type="CCDS" id="CCDS59473.1">
    <molecule id="Q8TDQ7-5"/>
</dbReference>
<dbReference type="RefSeq" id="NP_001257809.1">
    <molecule id="Q8TDQ7-5"/>
    <property type="nucleotide sequence ID" value="NM_001270880.2"/>
</dbReference>
<dbReference type="RefSeq" id="NP_001257810.1">
    <molecule id="Q8TDQ7-4"/>
    <property type="nucleotide sequence ID" value="NM_001270881.2"/>
</dbReference>
<dbReference type="RefSeq" id="NP_612208.1">
    <molecule id="Q8TDQ7-1"/>
    <property type="nucleotide sequence ID" value="NM_138335.3"/>
</dbReference>
<dbReference type="SMR" id="Q8TDQ7"/>
<dbReference type="BioGRID" id="126335">
    <property type="interactions" value="46"/>
</dbReference>
<dbReference type="DIP" id="DIP-62122N"/>
<dbReference type="FunCoup" id="Q8TDQ7">
    <property type="interactions" value="2947"/>
</dbReference>
<dbReference type="IntAct" id="Q8TDQ7">
    <property type="interactions" value="24"/>
</dbReference>
<dbReference type="STRING" id="9606.ENSP00000295448"/>
<dbReference type="GlyGen" id="Q8TDQ7">
    <property type="glycosylation" value="1 site, 1 O-linked glycan (1 site)"/>
</dbReference>
<dbReference type="iPTMnet" id="Q8TDQ7"/>
<dbReference type="MetOSite" id="Q8TDQ7"/>
<dbReference type="PhosphoSitePlus" id="Q8TDQ7"/>
<dbReference type="BioMuta" id="GNPDA2"/>
<dbReference type="DMDM" id="74723936"/>
<dbReference type="jPOST" id="Q8TDQ7"/>
<dbReference type="MassIVE" id="Q8TDQ7"/>
<dbReference type="PaxDb" id="9606-ENSP00000295448"/>
<dbReference type="PeptideAtlas" id="Q8TDQ7"/>
<dbReference type="ProteomicsDB" id="4374"/>
<dbReference type="ProteomicsDB" id="61529"/>
<dbReference type="ProteomicsDB" id="74327">
    <molecule id="Q8TDQ7-1"/>
</dbReference>
<dbReference type="ProteomicsDB" id="74328">
    <molecule id="Q8TDQ7-2"/>
</dbReference>
<dbReference type="ProteomicsDB" id="74329">
    <molecule id="Q8TDQ7-3"/>
</dbReference>
<dbReference type="Pumba" id="Q8TDQ7"/>
<dbReference type="TopDownProteomics" id="Q8TDQ7-2">
    <molecule id="Q8TDQ7-2"/>
</dbReference>
<dbReference type="Antibodypedia" id="23728">
    <property type="antibodies" value="126 antibodies from 28 providers"/>
</dbReference>
<dbReference type="DNASU" id="132789"/>
<dbReference type="Ensembl" id="ENST00000295448.8">
    <molecule id="Q8TDQ7-1"/>
    <property type="protein sequence ID" value="ENSP00000295448.3"/>
    <property type="gene ID" value="ENSG00000163281.12"/>
</dbReference>
<dbReference type="Ensembl" id="ENST00000507534.5">
    <molecule id="Q8TDQ7-4"/>
    <property type="protein sequence ID" value="ENSP00000427423.1"/>
    <property type="gene ID" value="ENSG00000163281.12"/>
</dbReference>
<dbReference type="Ensembl" id="ENST00000507917.5">
    <molecule id="Q8TDQ7-5"/>
    <property type="protein sequence ID" value="ENSP00000425868.1"/>
    <property type="gene ID" value="ENSG00000163281.12"/>
</dbReference>
<dbReference type="Ensembl" id="ENST00000509756.1">
    <molecule id="Q8TDQ7-3"/>
    <property type="protein sequence ID" value="ENSP00000424061.1"/>
    <property type="gene ID" value="ENSG00000163281.12"/>
</dbReference>
<dbReference type="GeneID" id="132789"/>
<dbReference type="KEGG" id="hsa:132789"/>
<dbReference type="MANE-Select" id="ENST00000295448.8">
    <property type="protein sequence ID" value="ENSP00000295448.3"/>
    <property type="RefSeq nucleotide sequence ID" value="NM_138335.3"/>
    <property type="RefSeq protein sequence ID" value="NP_612208.1"/>
</dbReference>
<dbReference type="UCSC" id="uc003gwy.5">
    <molecule id="Q8TDQ7-1"/>
    <property type="organism name" value="human"/>
</dbReference>
<dbReference type="AGR" id="HGNC:21526"/>
<dbReference type="CTD" id="132789"/>
<dbReference type="DisGeNET" id="132789"/>
<dbReference type="GeneCards" id="GNPDA2"/>
<dbReference type="HGNC" id="HGNC:21526">
    <property type="gene designation" value="GNPDA2"/>
</dbReference>
<dbReference type="HPA" id="ENSG00000163281">
    <property type="expression patterns" value="Low tissue specificity"/>
</dbReference>
<dbReference type="MIM" id="613222">
    <property type="type" value="gene"/>
</dbReference>
<dbReference type="neXtProt" id="NX_Q8TDQ7"/>
<dbReference type="OpenTargets" id="ENSG00000163281"/>
<dbReference type="PharmGKB" id="PA134939177"/>
<dbReference type="VEuPathDB" id="HostDB:ENSG00000163281"/>
<dbReference type="eggNOG" id="KOG3148">
    <property type="taxonomic scope" value="Eukaryota"/>
</dbReference>
<dbReference type="GeneTree" id="ENSGT00390000014316"/>
<dbReference type="HOGENOM" id="CLU_049611_0_1_1"/>
<dbReference type="InParanoid" id="Q8TDQ7"/>
<dbReference type="OMA" id="MEFSKHI"/>
<dbReference type="OrthoDB" id="7663298at2759"/>
<dbReference type="PAN-GO" id="Q8TDQ7">
    <property type="GO annotations" value="6 GO annotations based on evolutionary models"/>
</dbReference>
<dbReference type="PhylomeDB" id="Q8TDQ7"/>
<dbReference type="TreeFam" id="TF300841"/>
<dbReference type="BRENDA" id="3.5.99.6">
    <property type="organism ID" value="2681"/>
</dbReference>
<dbReference type="PathwayCommons" id="Q8TDQ7"/>
<dbReference type="Reactome" id="R-HSA-70171">
    <property type="pathway name" value="Glycolysis"/>
</dbReference>
<dbReference type="SignaLink" id="Q8TDQ7"/>
<dbReference type="UniPathway" id="UPA00113">
    <property type="reaction ID" value="UER00528"/>
</dbReference>
<dbReference type="BioGRID-ORCS" id="132789">
    <property type="hits" value="19 hits in 1155 CRISPR screens"/>
</dbReference>
<dbReference type="ChiTaRS" id="GNPDA2">
    <property type="organism name" value="human"/>
</dbReference>
<dbReference type="GeneWiki" id="GNPDA2"/>
<dbReference type="GenomeRNAi" id="132789"/>
<dbReference type="Pharos" id="Q8TDQ7">
    <property type="development level" value="Tbio"/>
</dbReference>
<dbReference type="PRO" id="PR:Q8TDQ7"/>
<dbReference type="Proteomes" id="UP000005640">
    <property type="component" value="Chromosome 4"/>
</dbReference>
<dbReference type="RNAct" id="Q8TDQ7">
    <property type="molecule type" value="protein"/>
</dbReference>
<dbReference type="Bgee" id="ENSG00000163281">
    <property type="expression patterns" value="Expressed in secondary oocyte and 146 other cell types or tissues"/>
</dbReference>
<dbReference type="ExpressionAtlas" id="Q8TDQ7">
    <property type="expression patterns" value="baseline and differential"/>
</dbReference>
<dbReference type="GO" id="GO:0005737">
    <property type="term" value="C:cytoplasm"/>
    <property type="evidence" value="ECO:0000318"/>
    <property type="project" value="GO_Central"/>
</dbReference>
<dbReference type="GO" id="GO:0005829">
    <property type="term" value="C:cytosol"/>
    <property type="evidence" value="ECO:0000304"/>
    <property type="project" value="Reactome"/>
</dbReference>
<dbReference type="GO" id="GO:0005634">
    <property type="term" value="C:nucleus"/>
    <property type="evidence" value="ECO:0007005"/>
    <property type="project" value="UniProtKB"/>
</dbReference>
<dbReference type="GO" id="GO:0004342">
    <property type="term" value="F:glucosamine-6-phosphate deaminase activity"/>
    <property type="evidence" value="ECO:0000314"/>
    <property type="project" value="UniProtKB"/>
</dbReference>
<dbReference type="GO" id="GO:0042802">
    <property type="term" value="F:identical protein binding"/>
    <property type="evidence" value="ECO:0000318"/>
    <property type="project" value="GO_Central"/>
</dbReference>
<dbReference type="GO" id="GO:0016853">
    <property type="term" value="F:isomerase activity"/>
    <property type="evidence" value="ECO:0007669"/>
    <property type="project" value="UniProtKB-KW"/>
</dbReference>
<dbReference type="GO" id="GO:0005975">
    <property type="term" value="P:carbohydrate metabolic process"/>
    <property type="evidence" value="ECO:0007669"/>
    <property type="project" value="InterPro"/>
</dbReference>
<dbReference type="GO" id="GO:0006043">
    <property type="term" value="P:glucosamine catabolic process"/>
    <property type="evidence" value="ECO:0000318"/>
    <property type="project" value="GO_Central"/>
</dbReference>
<dbReference type="GO" id="GO:0006046">
    <property type="term" value="P:N-acetylglucosamine catabolic process"/>
    <property type="evidence" value="ECO:0000318"/>
    <property type="project" value="GO_Central"/>
</dbReference>
<dbReference type="GO" id="GO:0019262">
    <property type="term" value="P:N-acetylneuraminate catabolic process"/>
    <property type="evidence" value="ECO:0000318"/>
    <property type="project" value="GO_Central"/>
</dbReference>
<dbReference type="GO" id="GO:0006048">
    <property type="term" value="P:UDP-N-acetylglucosamine biosynthetic process"/>
    <property type="evidence" value="ECO:0000315"/>
    <property type="project" value="UniProtKB"/>
</dbReference>
<dbReference type="CDD" id="cd01399">
    <property type="entry name" value="GlcN6P_deaminase"/>
    <property type="match status" value="1"/>
</dbReference>
<dbReference type="FunFam" id="3.40.50.1360:FF:000004">
    <property type="entry name" value="Glucosamine-6-phosphate isomerase"/>
    <property type="match status" value="1"/>
</dbReference>
<dbReference type="Gene3D" id="3.40.50.1360">
    <property type="match status" value="1"/>
</dbReference>
<dbReference type="HAMAP" id="MF_01241">
    <property type="entry name" value="GlcN6P_deamin"/>
    <property type="match status" value="1"/>
</dbReference>
<dbReference type="InterPro" id="IPR006148">
    <property type="entry name" value="Glc/Gal-6P_isomerase"/>
</dbReference>
<dbReference type="InterPro" id="IPR004547">
    <property type="entry name" value="Glucosamine6P_isomerase"/>
</dbReference>
<dbReference type="InterPro" id="IPR018321">
    <property type="entry name" value="Glucosamine6P_isomerase_CS"/>
</dbReference>
<dbReference type="InterPro" id="IPR037171">
    <property type="entry name" value="NagB/RpiA_transferase-like"/>
</dbReference>
<dbReference type="NCBIfam" id="TIGR00502">
    <property type="entry name" value="nagB"/>
    <property type="match status" value="1"/>
</dbReference>
<dbReference type="PANTHER" id="PTHR11280">
    <property type="entry name" value="GLUCOSAMINE-6-PHOSPHATE ISOMERASE"/>
    <property type="match status" value="1"/>
</dbReference>
<dbReference type="PANTHER" id="PTHR11280:SF9">
    <property type="entry name" value="GLUCOSAMINE-6-PHOSPHATE ISOMERASE 2"/>
    <property type="match status" value="1"/>
</dbReference>
<dbReference type="Pfam" id="PF01182">
    <property type="entry name" value="Glucosamine_iso"/>
    <property type="match status" value="1"/>
</dbReference>
<dbReference type="SUPFAM" id="SSF100950">
    <property type="entry name" value="NagB/RpiA/CoA transferase-like"/>
    <property type="match status" value="1"/>
</dbReference>
<dbReference type="PROSITE" id="PS01161">
    <property type="entry name" value="GLC_GALNAC_ISOMERASE"/>
    <property type="match status" value="1"/>
</dbReference>
<evidence type="ECO:0000250" key="1"/>
<evidence type="ECO:0000250" key="2">
    <source>
        <dbReference type="UniProtKB" id="O88958"/>
    </source>
</evidence>
<evidence type="ECO:0000255" key="3"/>
<evidence type="ECO:0000269" key="4">
    <source>
    </source>
</evidence>
<evidence type="ECO:0000269" key="5">
    <source>
    </source>
</evidence>
<evidence type="ECO:0000269" key="6">
    <source>
    </source>
</evidence>
<evidence type="ECO:0000303" key="7">
    <source>
    </source>
</evidence>
<evidence type="ECO:0000303" key="8">
    <source>
    </source>
</evidence>
<evidence type="ECO:0000303" key="9">
    <source>
    </source>
</evidence>
<evidence type="ECO:0000303" key="10">
    <source ref="2"/>
</evidence>
<evidence type="ECO:0000303" key="11">
    <source ref="4"/>
</evidence>
<evidence type="ECO:0000305" key="12"/>
<evidence type="ECO:0000305" key="13">
    <source>
    </source>
</evidence>
<evidence type="ECO:0000305" key="14">
    <source>
    </source>
</evidence>
<evidence type="ECO:0000312" key="15">
    <source>
        <dbReference type="HGNC" id="HGNC:21526"/>
    </source>
</evidence>
<evidence type="ECO:0000312" key="16">
    <source>
        <dbReference type="Proteomes" id="UP000005640"/>
    </source>
</evidence>
<reference key="1">
    <citation type="journal article" date="2003" name="J. Cell. Biochem.">
        <title>Cloning and functional characterization of GNPI2, a novel human homolog of glucosamine-6-phosphate isomerase/oscillin.</title>
        <authorList>
            <person name="Zhang J."/>
            <person name="Zhang W."/>
            <person name="Zou D."/>
            <person name="Chen G."/>
            <person name="Wan T."/>
            <person name="Li N."/>
            <person name="Cao X."/>
        </authorList>
    </citation>
    <scope>NUCLEOTIDE SEQUENCE [MRNA] (ISOFORM 1)</scope>
    <scope>FUNCTION</scope>
    <scope>CATALYTIC ACTIVITY</scope>
    <scope>ACTIVITY REGULATION</scope>
    <scope>TISSUE SPECIFICITY</scope>
</reference>
<reference key="2">
    <citation type="submission" date="2002-11" db="EMBL/GenBank/DDBJ databases">
        <title>Characterization of a novel putative glucosamine-6-phosphate isomerase.</title>
        <authorList>
            <person name="Xu J."/>
            <person name="Xie Y."/>
            <person name="Mao Y."/>
        </authorList>
    </citation>
    <scope>NUCLEOTIDE SEQUENCE [MRNA] (ISOFORM 5)</scope>
</reference>
<reference key="3">
    <citation type="journal article" date="2004" name="Nat. Genet.">
        <title>Complete sequencing and characterization of 21,243 full-length human cDNAs.</title>
        <authorList>
            <person name="Ota T."/>
            <person name="Suzuki Y."/>
            <person name="Nishikawa T."/>
            <person name="Otsuki T."/>
            <person name="Sugiyama T."/>
            <person name="Irie R."/>
            <person name="Wakamatsu A."/>
            <person name="Hayashi K."/>
            <person name="Sato H."/>
            <person name="Nagai K."/>
            <person name="Kimura K."/>
            <person name="Makita H."/>
            <person name="Sekine M."/>
            <person name="Obayashi M."/>
            <person name="Nishi T."/>
            <person name="Shibahara T."/>
            <person name="Tanaka T."/>
            <person name="Ishii S."/>
            <person name="Yamamoto J."/>
            <person name="Saito K."/>
            <person name="Kawai Y."/>
            <person name="Isono Y."/>
            <person name="Nakamura Y."/>
            <person name="Nagahari K."/>
            <person name="Murakami K."/>
            <person name="Yasuda T."/>
            <person name="Iwayanagi T."/>
            <person name="Wagatsuma M."/>
            <person name="Shiratori A."/>
            <person name="Sudo H."/>
            <person name="Hosoiri T."/>
            <person name="Kaku Y."/>
            <person name="Kodaira H."/>
            <person name="Kondo H."/>
            <person name="Sugawara M."/>
            <person name="Takahashi M."/>
            <person name="Kanda K."/>
            <person name="Yokoi T."/>
            <person name="Furuya T."/>
            <person name="Kikkawa E."/>
            <person name="Omura Y."/>
            <person name="Abe K."/>
            <person name="Kamihara K."/>
            <person name="Katsuta N."/>
            <person name="Sato K."/>
            <person name="Tanikawa M."/>
            <person name="Yamazaki M."/>
            <person name="Ninomiya K."/>
            <person name="Ishibashi T."/>
            <person name="Yamashita H."/>
            <person name="Murakawa K."/>
            <person name="Fujimori K."/>
            <person name="Tanai H."/>
            <person name="Kimata M."/>
            <person name="Watanabe M."/>
            <person name="Hiraoka S."/>
            <person name="Chiba Y."/>
            <person name="Ishida S."/>
            <person name="Ono Y."/>
            <person name="Takiguchi S."/>
            <person name="Watanabe S."/>
            <person name="Yosida M."/>
            <person name="Hotuta T."/>
            <person name="Kusano J."/>
            <person name="Kanehori K."/>
            <person name="Takahashi-Fujii A."/>
            <person name="Hara H."/>
            <person name="Tanase T.-O."/>
            <person name="Nomura Y."/>
            <person name="Togiya S."/>
            <person name="Komai F."/>
            <person name="Hara R."/>
            <person name="Takeuchi K."/>
            <person name="Arita M."/>
            <person name="Imose N."/>
            <person name="Musashino K."/>
            <person name="Yuuki H."/>
            <person name="Oshima A."/>
            <person name="Sasaki N."/>
            <person name="Aotsuka S."/>
            <person name="Yoshikawa Y."/>
            <person name="Matsunawa H."/>
            <person name="Ichihara T."/>
            <person name="Shiohata N."/>
            <person name="Sano S."/>
            <person name="Moriya S."/>
            <person name="Momiyama H."/>
            <person name="Satoh N."/>
            <person name="Takami S."/>
            <person name="Terashima Y."/>
            <person name="Suzuki O."/>
            <person name="Nakagawa S."/>
            <person name="Senoh A."/>
            <person name="Mizoguchi H."/>
            <person name="Goto Y."/>
            <person name="Shimizu F."/>
            <person name="Wakebe H."/>
            <person name="Hishigaki H."/>
            <person name="Watanabe T."/>
            <person name="Sugiyama A."/>
            <person name="Takemoto M."/>
            <person name="Kawakami B."/>
            <person name="Yamazaki M."/>
            <person name="Watanabe K."/>
            <person name="Kumagai A."/>
            <person name="Itakura S."/>
            <person name="Fukuzumi Y."/>
            <person name="Fujimori Y."/>
            <person name="Komiyama M."/>
            <person name="Tashiro H."/>
            <person name="Tanigami A."/>
            <person name="Fujiwara T."/>
            <person name="Ono T."/>
            <person name="Yamada K."/>
            <person name="Fujii Y."/>
            <person name="Ozaki K."/>
            <person name="Hirao M."/>
            <person name="Ohmori Y."/>
            <person name="Kawabata A."/>
            <person name="Hikiji T."/>
            <person name="Kobatake N."/>
            <person name="Inagaki H."/>
            <person name="Ikema Y."/>
            <person name="Okamoto S."/>
            <person name="Okitani R."/>
            <person name="Kawakami T."/>
            <person name="Noguchi S."/>
            <person name="Itoh T."/>
            <person name="Shigeta K."/>
            <person name="Senba T."/>
            <person name="Matsumura K."/>
            <person name="Nakajima Y."/>
            <person name="Mizuno T."/>
            <person name="Morinaga M."/>
            <person name="Sasaki M."/>
            <person name="Togashi T."/>
            <person name="Oyama M."/>
            <person name="Hata H."/>
            <person name="Watanabe M."/>
            <person name="Komatsu T."/>
            <person name="Mizushima-Sugano J."/>
            <person name="Satoh T."/>
            <person name="Shirai Y."/>
            <person name="Takahashi Y."/>
            <person name="Nakagawa K."/>
            <person name="Okumura K."/>
            <person name="Nagase T."/>
            <person name="Nomura N."/>
            <person name="Kikuchi H."/>
            <person name="Masuho Y."/>
            <person name="Yamashita R."/>
            <person name="Nakai K."/>
            <person name="Yada T."/>
            <person name="Nakamura Y."/>
            <person name="Ohara O."/>
            <person name="Isogai T."/>
            <person name="Sugano S."/>
        </authorList>
    </citation>
    <scope>NUCLEOTIDE SEQUENCE [LARGE SCALE MRNA] (ISOFORMS 1 AND 4)</scope>
    <source>
        <tissue>Subthalamic nucleus</tissue>
    </source>
</reference>
<reference key="4">
    <citation type="submission" date="2005-03" db="EMBL/GenBank/DDBJ databases">
        <authorList>
            <person name="Totoki Y."/>
            <person name="Toyoda A."/>
            <person name="Takeda T."/>
            <person name="Sakaki Y."/>
            <person name="Tanaka A."/>
            <person name="Yokoyama S."/>
            <person name="Ohara O."/>
            <person name="Nagase T."/>
            <person name="Kikuno R.F."/>
        </authorList>
    </citation>
    <scope>NUCLEOTIDE SEQUENCE [LARGE SCALE MRNA] (ISOFORM 3)</scope>
    <source>
        <tissue>Aortic endothelium</tissue>
    </source>
</reference>
<reference key="5">
    <citation type="journal article" date="2005" name="Nature">
        <title>Generation and annotation of the DNA sequences of human chromosomes 2 and 4.</title>
        <authorList>
            <person name="Hillier L.W."/>
            <person name="Graves T.A."/>
            <person name="Fulton R.S."/>
            <person name="Fulton L.A."/>
            <person name="Pepin K.H."/>
            <person name="Minx P."/>
            <person name="Wagner-McPherson C."/>
            <person name="Layman D."/>
            <person name="Wylie K."/>
            <person name="Sekhon M."/>
            <person name="Becker M.C."/>
            <person name="Fewell G.A."/>
            <person name="Delehaunty K.D."/>
            <person name="Miner T.L."/>
            <person name="Nash W.E."/>
            <person name="Kremitzki C."/>
            <person name="Oddy L."/>
            <person name="Du H."/>
            <person name="Sun H."/>
            <person name="Bradshaw-Cordum H."/>
            <person name="Ali J."/>
            <person name="Carter J."/>
            <person name="Cordes M."/>
            <person name="Harris A."/>
            <person name="Isak A."/>
            <person name="van Brunt A."/>
            <person name="Nguyen C."/>
            <person name="Du F."/>
            <person name="Courtney L."/>
            <person name="Kalicki J."/>
            <person name="Ozersky P."/>
            <person name="Abbott S."/>
            <person name="Armstrong J."/>
            <person name="Belter E.A."/>
            <person name="Caruso L."/>
            <person name="Cedroni M."/>
            <person name="Cotton M."/>
            <person name="Davidson T."/>
            <person name="Desai A."/>
            <person name="Elliott G."/>
            <person name="Erb T."/>
            <person name="Fronick C."/>
            <person name="Gaige T."/>
            <person name="Haakenson W."/>
            <person name="Haglund K."/>
            <person name="Holmes A."/>
            <person name="Harkins R."/>
            <person name="Kim K."/>
            <person name="Kruchowski S.S."/>
            <person name="Strong C.M."/>
            <person name="Grewal N."/>
            <person name="Goyea E."/>
            <person name="Hou S."/>
            <person name="Levy A."/>
            <person name="Martinka S."/>
            <person name="Mead K."/>
            <person name="McLellan M.D."/>
            <person name="Meyer R."/>
            <person name="Randall-Maher J."/>
            <person name="Tomlinson C."/>
            <person name="Dauphin-Kohlberg S."/>
            <person name="Kozlowicz-Reilly A."/>
            <person name="Shah N."/>
            <person name="Swearengen-Shahid S."/>
            <person name="Snider J."/>
            <person name="Strong J.T."/>
            <person name="Thompson J."/>
            <person name="Yoakum M."/>
            <person name="Leonard S."/>
            <person name="Pearman C."/>
            <person name="Trani L."/>
            <person name="Radionenko M."/>
            <person name="Waligorski J.E."/>
            <person name="Wang C."/>
            <person name="Rock S.M."/>
            <person name="Tin-Wollam A.-M."/>
            <person name="Maupin R."/>
            <person name="Latreille P."/>
            <person name="Wendl M.C."/>
            <person name="Yang S.-P."/>
            <person name="Pohl C."/>
            <person name="Wallis J.W."/>
            <person name="Spieth J."/>
            <person name="Bieri T.A."/>
            <person name="Berkowicz N."/>
            <person name="Nelson J.O."/>
            <person name="Osborne J."/>
            <person name="Ding L."/>
            <person name="Meyer R."/>
            <person name="Sabo A."/>
            <person name="Shotland Y."/>
            <person name="Sinha P."/>
            <person name="Wohldmann P.E."/>
            <person name="Cook L.L."/>
            <person name="Hickenbotham M.T."/>
            <person name="Eldred J."/>
            <person name="Williams D."/>
            <person name="Jones T.A."/>
            <person name="She X."/>
            <person name="Ciccarelli F.D."/>
            <person name="Izaurralde E."/>
            <person name="Taylor J."/>
            <person name="Schmutz J."/>
            <person name="Myers R.M."/>
            <person name="Cox D.R."/>
            <person name="Huang X."/>
            <person name="McPherson J.D."/>
            <person name="Mardis E.R."/>
            <person name="Clifton S.W."/>
            <person name="Warren W.C."/>
            <person name="Chinwalla A.T."/>
            <person name="Eddy S.R."/>
            <person name="Marra M.A."/>
            <person name="Ovcharenko I."/>
            <person name="Furey T.S."/>
            <person name="Miller W."/>
            <person name="Eichler E.E."/>
            <person name="Bork P."/>
            <person name="Suyama M."/>
            <person name="Torrents D."/>
            <person name="Waterston R.H."/>
            <person name="Wilson R.K."/>
        </authorList>
    </citation>
    <scope>NUCLEOTIDE SEQUENCE [LARGE SCALE GENOMIC DNA]</scope>
</reference>
<reference key="6">
    <citation type="submission" date="2005-07" db="EMBL/GenBank/DDBJ databases">
        <authorList>
            <person name="Mural R.J."/>
            <person name="Istrail S."/>
            <person name="Sutton G.G."/>
            <person name="Florea L."/>
            <person name="Halpern A.L."/>
            <person name="Mobarry C.M."/>
            <person name="Lippert R."/>
            <person name="Walenz B."/>
            <person name="Shatkay H."/>
            <person name="Dew I."/>
            <person name="Miller J.R."/>
            <person name="Flanigan M.J."/>
            <person name="Edwards N.J."/>
            <person name="Bolanos R."/>
            <person name="Fasulo D."/>
            <person name="Halldorsson B.V."/>
            <person name="Hannenhalli S."/>
            <person name="Turner R."/>
            <person name="Yooseph S."/>
            <person name="Lu F."/>
            <person name="Nusskern D.R."/>
            <person name="Shue B.C."/>
            <person name="Zheng X.H."/>
            <person name="Zhong F."/>
            <person name="Delcher A.L."/>
            <person name="Huson D.H."/>
            <person name="Kravitz S.A."/>
            <person name="Mouchard L."/>
            <person name="Reinert K."/>
            <person name="Remington K.A."/>
            <person name="Clark A.G."/>
            <person name="Waterman M.S."/>
            <person name="Eichler E.E."/>
            <person name="Adams M.D."/>
            <person name="Hunkapiller M.W."/>
            <person name="Myers E.W."/>
            <person name="Venter J.C."/>
        </authorList>
    </citation>
    <scope>NUCLEOTIDE SEQUENCE [LARGE SCALE GENOMIC DNA]</scope>
</reference>
<reference key="7">
    <citation type="journal article" date="2004" name="Genome Res.">
        <title>The status, quality, and expansion of the NIH full-length cDNA project: the Mammalian Gene Collection (MGC).</title>
        <authorList>
            <consortium name="The MGC Project Team"/>
        </authorList>
    </citation>
    <scope>NUCLEOTIDE SEQUENCE [LARGE SCALE MRNA] (ISOFORM 2)</scope>
    <scope>VARIANT SER-182</scope>
    <source>
        <tissue>Uterus</tissue>
    </source>
</reference>
<reference key="8">
    <citation type="journal article" date="2007" name="BMC Genomics">
        <title>The full-ORF clone resource of the German cDNA consortium.</title>
        <authorList>
            <person name="Bechtel S."/>
            <person name="Rosenfelder H."/>
            <person name="Duda A."/>
            <person name="Schmidt C.P."/>
            <person name="Ernst U."/>
            <person name="Wellenreuther R."/>
            <person name="Mehrle A."/>
            <person name="Schuster C."/>
            <person name="Bahr A."/>
            <person name="Bloecker H."/>
            <person name="Heubner D."/>
            <person name="Hoerlein A."/>
            <person name="Michel G."/>
            <person name="Wedler H."/>
            <person name="Koehrer K."/>
            <person name="Ottenwaelder B."/>
            <person name="Poustka A."/>
            <person name="Wiemann S."/>
            <person name="Schupp I."/>
        </authorList>
    </citation>
    <scope>NUCLEOTIDE SEQUENCE [LARGE SCALE MRNA] OF 120-276 (ISOFORM 1)</scope>
    <source>
        <tissue>Kidney</tissue>
    </source>
</reference>
<reference key="9">
    <citation type="journal article" date="2003" name="FEBS Lett.">
        <title>Two mammalian glucosamine-6-phosphate deaminases: a structural and genetic study.</title>
        <authorList>
            <person name="Arreola R."/>
            <person name="Valderrama B."/>
            <person name="Morante M.L."/>
            <person name="Horjales E."/>
        </authorList>
    </citation>
    <scope>SUBUNIT</scope>
</reference>
<reference key="10">
    <citation type="journal article" date="2016" name="Glycobiology">
        <title>Hexosamine biosynthesis in keratinocytes: roles of GFAT and GNPDA enzymes in the maintenance of UDP-GlcNAc content and hyaluronan synthesis.</title>
        <authorList>
            <person name="Oikari S."/>
            <person name="Makkonen K."/>
            <person name="Deen A.J."/>
            <person name="Tyni I."/>
            <person name="Kaernae R."/>
            <person name="Tammi R.H."/>
            <person name="Tammi M.I."/>
        </authorList>
    </citation>
    <scope>FUNCTION</scope>
    <scope>CATALYTIC ACTIVITY</scope>
    <scope>PATHWAY</scope>
</reference>
<accession>Q8TDQ7</accession>
<accession>B4DJF3</accession>
<accession>Q2VYF1</accession>
<accession>Q59EA7</accession>
<accession>Q8NCZ8</accession>
<accession>Q96BJ4</accession>
<accession>Q96NC6</accession>
<sequence length="276" mass="31085">MRLVILDNYDLASEWAAKYICNRIIQFKPGQDRYFTLGLPTGSTPLGCYKKLIEYHKNGHLSFKYVKTFNMDEYVGLPRNHPESYHSYMWNNFFKHIDIDPNNAHILDGNAADLQAECDAFENKIKEAGGIDLFVGGIGPDGHIAFNEPGSSLVSRTRLKTLAMDTILANAKYFDGDLSKVPTMALTVGVGTVMDAREVMILITGAHKAFALYKAIEEGVNHMWTVSAFQQHPRTIFVCDEDATLELRVKTVKYFKGLMHVHNKLVDPLFSMKDGN</sequence>
<proteinExistence type="evidence at protein level"/>
<name>GNPI2_HUMAN</name>